<dbReference type="EMBL" id="AC138749">
    <property type="status" value="NOT_ANNOTATED_CDS"/>
    <property type="molecule type" value="Genomic_DNA"/>
</dbReference>
<dbReference type="CCDS" id="CCDS91968.1"/>
<dbReference type="RefSeq" id="NP_001352302.2">
    <property type="nucleotide sequence ID" value="NM_001365373.2"/>
</dbReference>
<dbReference type="SMR" id="P0DX01"/>
<dbReference type="PeptideAtlas" id="P0DX01"/>
<dbReference type="Ensembl" id="ENST00000620691.5">
    <property type="protein sequence ID" value="ENSP00000484257.2"/>
    <property type="gene ID" value="ENSG00000227717.5"/>
</dbReference>
<dbReference type="GeneID" id="100132202"/>
<dbReference type="MANE-Select" id="ENST00000620691.5">
    <property type="protein sequence ID" value="ENSP00000484257.2"/>
    <property type="RefSeq nucleotide sequence ID" value="NM_001365373.2"/>
    <property type="RefSeq protein sequence ID" value="NP_001352302.2"/>
</dbReference>
<dbReference type="AGR" id="HGNC:55711"/>
<dbReference type="GeneCards" id="GOLGA6L25"/>
<dbReference type="HGNC" id="HGNC:55711">
    <property type="gene designation" value="GOLGA6L25"/>
</dbReference>
<dbReference type="GeneTree" id="ENSGT00940000163338"/>
<dbReference type="PRO" id="PR:P0DX01"/>
<dbReference type="Proteomes" id="UP000005640">
    <property type="component" value="Chromosome 15"/>
</dbReference>
<dbReference type="InterPro" id="IPR026737">
    <property type="entry name" value="GOLGA6L"/>
</dbReference>
<dbReference type="PANTHER" id="PTHR23143:SF31">
    <property type="entry name" value="GOLGIN SUBFAMILY A MEMBER 6-LIKE PROTEIN 1-RELATED"/>
    <property type="match status" value="1"/>
</dbReference>
<dbReference type="PANTHER" id="PTHR23143">
    <property type="entry name" value="TRICHOHYALIN-RELATED"/>
    <property type="match status" value="1"/>
</dbReference>
<sequence length="826" mass="104114">MWPQPHLPTHPHLPTHPHLPTHPHLPTHPMMSKETRQSKLAEAKEQLTDHHPQTNPSVGTAASDTKKKKINNGTNPETTTSGGCHSPEDEQKASHQHQEALRRELEAQVHTIRILTCQKTELQMALYYSQHAVKQLEGEARDLISRLHDSWKFAGELEQALSAVATQKKKADRYIEELTKERDALSLELYRNTITDEELKEKNAKLQEKLQLVESEKSEIQLNVKELKRKLERAKLLLPQQQLQAEADHLGKELQSVSAKLQAQVEENELWNRLNQQQEEKMWRQEEKIQEREEKIQEQEEKIREQEEKMRRQEEMMWEKEEKMRRQEEMMWEKEEKIRELEEKMHEQEKIREQEEKRQEEEKIREQEKRQEQEAKMWRQEEKIREQEEKIREQEKKMWRQEEKIHEQEKIREEEKRQEQEEMWRQEEKIREQEEIWRQKEKMHEQEEKIRKQEEKVWRQEEKMHDQEEKIREQEEKVWRQEEKIREQEEKMWRQEEKIREQEEMWREEEKMHEQEKIWEEEKRQEQEDKMWRQEEKIREQEEKVWRQEEKIREQEEKRQEQEEKMWKQEEKIREQEEKIREQEKIREQEEKIREQEEMMQEQEEKMGEQEEKMQEQEKMRRQEEKIREQEEKIREQKEKIREQEEKIWEQEEKIREQEEMMQEQEEKMGEQEEKMWEQEEEMQEQEEKMRRQEEKIREQEKKIREQEEKIREQEEMMQEQEEKMGEQEGKMCEQEAKMQEQEEKMRRQEEKIREQEKKIREQEEKIREQEEMMQEQEEKMWEQEEKMCEQEEKMQEQEEKMRRQEEKMREQEVRLRQQEEKMQEH</sequence>
<proteinExistence type="inferred from homology"/>
<gene>
    <name evidence="4" type="primary">GOLGA6L25</name>
</gene>
<organism>
    <name type="scientific">Homo sapiens</name>
    <name type="common">Human</name>
    <dbReference type="NCBI Taxonomy" id="9606"/>
    <lineage>
        <taxon>Eukaryota</taxon>
        <taxon>Metazoa</taxon>
        <taxon>Chordata</taxon>
        <taxon>Craniata</taxon>
        <taxon>Vertebrata</taxon>
        <taxon>Euteleostomi</taxon>
        <taxon>Mammalia</taxon>
        <taxon>Eutheria</taxon>
        <taxon>Euarchontoglires</taxon>
        <taxon>Primates</taxon>
        <taxon>Haplorrhini</taxon>
        <taxon>Catarrhini</taxon>
        <taxon>Hominidae</taxon>
        <taxon>Homo</taxon>
    </lineage>
</organism>
<comment type="similarity">
    <text evidence="3">Belongs to the GOLGA6 family.</text>
</comment>
<feature type="chain" id="PRO_0000457099" description="Golgin subfamily A member 6-like protein 25">
    <location>
        <begin position="1"/>
        <end position="826"/>
    </location>
</feature>
<feature type="region of interest" description="Disordered" evidence="2">
    <location>
        <begin position="1"/>
        <end position="100"/>
    </location>
</feature>
<feature type="region of interest" description="Disordered" evidence="2">
    <location>
        <begin position="297"/>
        <end position="327"/>
    </location>
</feature>
<feature type="region of interest" description="Disordered" evidence="2">
    <location>
        <begin position="345"/>
        <end position="425"/>
    </location>
</feature>
<feature type="region of interest" description="Disordered" evidence="2">
    <location>
        <begin position="502"/>
        <end position="534"/>
    </location>
</feature>
<feature type="region of interest" description="Disordered" evidence="2">
    <location>
        <begin position="547"/>
        <end position="646"/>
    </location>
</feature>
<feature type="region of interest" description="Disordered" evidence="2">
    <location>
        <begin position="658"/>
        <end position="826"/>
    </location>
</feature>
<feature type="coiled-coil region" evidence="1">
    <location>
        <begin position="157"/>
        <end position="822"/>
    </location>
</feature>
<feature type="compositionally biased region" description="Basic and acidic residues" evidence="2">
    <location>
        <begin position="31"/>
        <end position="52"/>
    </location>
</feature>
<feature type="compositionally biased region" description="Polar residues" evidence="2">
    <location>
        <begin position="53"/>
        <end position="63"/>
    </location>
</feature>
<feature type="compositionally biased region" description="Polar residues" evidence="2">
    <location>
        <begin position="71"/>
        <end position="83"/>
    </location>
</feature>
<feature type="compositionally biased region" description="Basic and acidic residues" evidence="2">
    <location>
        <begin position="86"/>
        <end position="100"/>
    </location>
</feature>
<feature type="compositionally biased region" description="Basic and acidic residues" evidence="2">
    <location>
        <begin position="658"/>
        <end position="678"/>
    </location>
</feature>
<feature type="compositionally biased region" description="Basic and acidic residues" evidence="2">
    <location>
        <begin position="686"/>
        <end position="826"/>
    </location>
</feature>
<reference key="1">
    <citation type="journal article" date="2006" name="Nature">
        <title>Analysis of the DNA sequence and duplication history of human chromosome 15.</title>
        <authorList>
            <person name="Zody M.C."/>
            <person name="Garber M."/>
            <person name="Sharpe T."/>
            <person name="Young S.K."/>
            <person name="Rowen L."/>
            <person name="O'Neill K."/>
            <person name="Whittaker C.A."/>
            <person name="Kamal M."/>
            <person name="Chang J.L."/>
            <person name="Cuomo C.A."/>
            <person name="Dewar K."/>
            <person name="FitzGerald M.G."/>
            <person name="Kodira C.D."/>
            <person name="Madan A."/>
            <person name="Qin S."/>
            <person name="Yang X."/>
            <person name="Abbasi N."/>
            <person name="Abouelleil A."/>
            <person name="Arachchi H.M."/>
            <person name="Baradarani L."/>
            <person name="Birditt B."/>
            <person name="Bloom S."/>
            <person name="Bloom T."/>
            <person name="Borowsky M.L."/>
            <person name="Burke J."/>
            <person name="Butler J."/>
            <person name="Cook A."/>
            <person name="DeArellano K."/>
            <person name="DeCaprio D."/>
            <person name="Dorris L. III"/>
            <person name="Dors M."/>
            <person name="Eichler E.E."/>
            <person name="Engels R."/>
            <person name="Fahey J."/>
            <person name="Fleetwood P."/>
            <person name="Friedman C."/>
            <person name="Gearin G."/>
            <person name="Hall J.L."/>
            <person name="Hensley G."/>
            <person name="Johnson E."/>
            <person name="Jones C."/>
            <person name="Kamat A."/>
            <person name="Kaur A."/>
            <person name="Locke D.P."/>
            <person name="Madan A."/>
            <person name="Munson G."/>
            <person name="Jaffe D.B."/>
            <person name="Lui A."/>
            <person name="Macdonald P."/>
            <person name="Mauceli E."/>
            <person name="Naylor J.W."/>
            <person name="Nesbitt R."/>
            <person name="Nicol R."/>
            <person name="O'Leary S.B."/>
            <person name="Ratcliffe A."/>
            <person name="Rounsley S."/>
            <person name="She X."/>
            <person name="Sneddon K.M.B."/>
            <person name="Stewart S."/>
            <person name="Sougnez C."/>
            <person name="Stone S.M."/>
            <person name="Topham K."/>
            <person name="Vincent D."/>
            <person name="Wang S."/>
            <person name="Zimmer A.R."/>
            <person name="Birren B.W."/>
            <person name="Hood L."/>
            <person name="Lander E.S."/>
            <person name="Nusbaum C."/>
        </authorList>
    </citation>
    <scope>NUCLEOTIDE SEQUENCE [LARGE SCALE GENOMIC DNA]</scope>
</reference>
<accession>P0DX01</accession>
<evidence type="ECO:0000255" key="1"/>
<evidence type="ECO:0000256" key="2">
    <source>
        <dbReference type="SAM" id="MobiDB-lite"/>
    </source>
</evidence>
<evidence type="ECO:0000305" key="3"/>
<evidence type="ECO:0000312" key="4">
    <source>
        <dbReference type="HGNC" id="HGNC:55711"/>
    </source>
</evidence>
<protein>
    <recommendedName>
        <fullName evidence="3">Golgin subfamily A member 6-like protein 25</fullName>
    </recommendedName>
</protein>
<name>GG6LY_HUMAN</name>
<keyword id="KW-0175">Coiled coil</keyword>
<keyword id="KW-1185">Reference proteome</keyword>